<accession>Q4AE62</accession>
<accession>A0A087X2H5</accession>
<accession>A8K5P2</accession>
<accession>D3DP81</accession>
<accession>G1UFN1</accession>
<accession>G5EA49</accession>
<accession>H7BYJ5</accession>
<accession>Q53SM7</accession>
<accession>Q53TC5</accession>
<accession>Q6P7E7</accession>
<accession>Q6PJB6</accession>
<accession>Q6WKW6</accession>
<accession>Q9HAE5</accession>
<organism>
    <name type="scientific">Homo sapiens</name>
    <name type="common">Human</name>
    <dbReference type="NCBI Taxonomy" id="9606"/>
    <lineage>
        <taxon>Eukaryota</taxon>
        <taxon>Metazoa</taxon>
        <taxon>Chordata</taxon>
        <taxon>Craniata</taxon>
        <taxon>Vertebrata</taxon>
        <taxon>Euteleostomi</taxon>
        <taxon>Mammalia</taxon>
        <taxon>Eutheria</taxon>
        <taxon>Euarchontoglires</taxon>
        <taxon>Primates</taxon>
        <taxon>Haplorrhini</taxon>
        <taxon>Catarrhini</taxon>
        <taxon>Hominidae</taxon>
        <taxon>Homo</taxon>
    </lineage>
</organism>
<gene>
    <name evidence="6 11" type="primary">GTDC1</name>
    <name evidence="9" type="synonym">QTMAN</name>
</gene>
<reference key="1">
    <citation type="journal article" date="2004" name="DNA Cell Biol.">
        <title>Cloning and expression of human GTDC1 gene (glycosyltransferase-like domain containing 1) from human fetal library.</title>
        <authorList>
            <person name="Zhao E."/>
            <person name="Li Y."/>
            <person name="Fu X."/>
            <person name="Zhang J.-Y."/>
            <person name="Zeng H."/>
            <person name="Zeng L."/>
            <person name="Lin Y."/>
            <person name="Chen J."/>
            <person name="Yin G."/>
            <person name="Qian J."/>
            <person name="Ying K."/>
            <person name="Xie Y."/>
            <person name="Zhao R.C."/>
            <person name="Mao Y.-M."/>
        </authorList>
    </citation>
    <scope>NUCLEOTIDE SEQUENCE [MRNA] (ISOFORM 1)</scope>
    <scope>TISSUE SPECIFICITY</scope>
    <scope>VARIANT ILE-137</scope>
    <source>
        <tissue>Brain</tissue>
    </source>
</reference>
<reference key="2">
    <citation type="journal article" date="2011" name="Biosci. Biotechnol. Biochem.">
        <title>Remarkable expression in the colon adenocarcinoma of Hmat-Xa, a human mannosyltransferase-like gene, that is homologous to Drosophila gene GC15914.</title>
        <authorList>
            <person name="Shimono N."/>
            <person name="Nishimura Y."/>
            <person name="Kamiguchi H."/>
            <person name="Nishikawa Y."/>
        </authorList>
    </citation>
    <scope>NUCLEOTIDE SEQUENCE [MRNA] (ISOFORM 1)</scope>
    <scope>TISSUE SPECIFICITY</scope>
    <source>
        <tissue>Fetal brain</tissue>
    </source>
</reference>
<reference key="3">
    <citation type="submission" date="2005-01" db="EMBL/GenBank/DDBJ databases">
        <title>Cloning and expression of a novel human mannosyltransferase candidate.</title>
        <authorList>
            <person name="Nishikawa Y."/>
            <person name="Takahashi T."/>
            <person name="Saito A."/>
            <person name="Shimazawa K."/>
            <person name="Hosaka M."/>
        </authorList>
    </citation>
    <scope>NUCLEOTIDE SEQUENCE [MRNA] (ISOFORM 1)</scope>
</reference>
<reference key="4">
    <citation type="journal article" date="2004" name="Nat. Genet.">
        <title>Complete sequencing and characterization of 21,243 full-length human cDNAs.</title>
        <authorList>
            <person name="Ota T."/>
            <person name="Suzuki Y."/>
            <person name="Nishikawa T."/>
            <person name="Otsuki T."/>
            <person name="Sugiyama T."/>
            <person name="Irie R."/>
            <person name="Wakamatsu A."/>
            <person name="Hayashi K."/>
            <person name="Sato H."/>
            <person name="Nagai K."/>
            <person name="Kimura K."/>
            <person name="Makita H."/>
            <person name="Sekine M."/>
            <person name="Obayashi M."/>
            <person name="Nishi T."/>
            <person name="Shibahara T."/>
            <person name="Tanaka T."/>
            <person name="Ishii S."/>
            <person name="Yamamoto J."/>
            <person name="Saito K."/>
            <person name="Kawai Y."/>
            <person name="Isono Y."/>
            <person name="Nakamura Y."/>
            <person name="Nagahari K."/>
            <person name="Murakami K."/>
            <person name="Yasuda T."/>
            <person name="Iwayanagi T."/>
            <person name="Wagatsuma M."/>
            <person name="Shiratori A."/>
            <person name="Sudo H."/>
            <person name="Hosoiri T."/>
            <person name="Kaku Y."/>
            <person name="Kodaira H."/>
            <person name="Kondo H."/>
            <person name="Sugawara M."/>
            <person name="Takahashi M."/>
            <person name="Kanda K."/>
            <person name="Yokoi T."/>
            <person name="Furuya T."/>
            <person name="Kikkawa E."/>
            <person name="Omura Y."/>
            <person name="Abe K."/>
            <person name="Kamihara K."/>
            <person name="Katsuta N."/>
            <person name="Sato K."/>
            <person name="Tanikawa M."/>
            <person name="Yamazaki M."/>
            <person name="Ninomiya K."/>
            <person name="Ishibashi T."/>
            <person name="Yamashita H."/>
            <person name="Murakawa K."/>
            <person name="Fujimori K."/>
            <person name="Tanai H."/>
            <person name="Kimata M."/>
            <person name="Watanabe M."/>
            <person name="Hiraoka S."/>
            <person name="Chiba Y."/>
            <person name="Ishida S."/>
            <person name="Ono Y."/>
            <person name="Takiguchi S."/>
            <person name="Watanabe S."/>
            <person name="Yosida M."/>
            <person name="Hotuta T."/>
            <person name="Kusano J."/>
            <person name="Kanehori K."/>
            <person name="Takahashi-Fujii A."/>
            <person name="Hara H."/>
            <person name="Tanase T.-O."/>
            <person name="Nomura Y."/>
            <person name="Togiya S."/>
            <person name="Komai F."/>
            <person name="Hara R."/>
            <person name="Takeuchi K."/>
            <person name="Arita M."/>
            <person name="Imose N."/>
            <person name="Musashino K."/>
            <person name="Yuuki H."/>
            <person name="Oshima A."/>
            <person name="Sasaki N."/>
            <person name="Aotsuka S."/>
            <person name="Yoshikawa Y."/>
            <person name="Matsunawa H."/>
            <person name="Ichihara T."/>
            <person name="Shiohata N."/>
            <person name="Sano S."/>
            <person name="Moriya S."/>
            <person name="Momiyama H."/>
            <person name="Satoh N."/>
            <person name="Takami S."/>
            <person name="Terashima Y."/>
            <person name="Suzuki O."/>
            <person name="Nakagawa S."/>
            <person name="Senoh A."/>
            <person name="Mizoguchi H."/>
            <person name="Goto Y."/>
            <person name="Shimizu F."/>
            <person name="Wakebe H."/>
            <person name="Hishigaki H."/>
            <person name="Watanabe T."/>
            <person name="Sugiyama A."/>
            <person name="Takemoto M."/>
            <person name="Kawakami B."/>
            <person name="Yamazaki M."/>
            <person name="Watanabe K."/>
            <person name="Kumagai A."/>
            <person name="Itakura S."/>
            <person name="Fukuzumi Y."/>
            <person name="Fujimori Y."/>
            <person name="Komiyama M."/>
            <person name="Tashiro H."/>
            <person name="Tanigami A."/>
            <person name="Fujiwara T."/>
            <person name="Ono T."/>
            <person name="Yamada K."/>
            <person name="Fujii Y."/>
            <person name="Ozaki K."/>
            <person name="Hirao M."/>
            <person name="Ohmori Y."/>
            <person name="Kawabata A."/>
            <person name="Hikiji T."/>
            <person name="Kobatake N."/>
            <person name="Inagaki H."/>
            <person name="Ikema Y."/>
            <person name="Okamoto S."/>
            <person name="Okitani R."/>
            <person name="Kawakami T."/>
            <person name="Noguchi S."/>
            <person name="Itoh T."/>
            <person name="Shigeta K."/>
            <person name="Senba T."/>
            <person name="Matsumura K."/>
            <person name="Nakajima Y."/>
            <person name="Mizuno T."/>
            <person name="Morinaga M."/>
            <person name="Sasaki M."/>
            <person name="Togashi T."/>
            <person name="Oyama M."/>
            <person name="Hata H."/>
            <person name="Watanabe M."/>
            <person name="Komatsu T."/>
            <person name="Mizushima-Sugano J."/>
            <person name="Satoh T."/>
            <person name="Shirai Y."/>
            <person name="Takahashi Y."/>
            <person name="Nakagawa K."/>
            <person name="Okumura K."/>
            <person name="Nagase T."/>
            <person name="Nomura N."/>
            <person name="Kikuchi H."/>
            <person name="Masuho Y."/>
            <person name="Yamashita R."/>
            <person name="Nakai K."/>
            <person name="Yada T."/>
            <person name="Nakamura Y."/>
            <person name="Ohara O."/>
            <person name="Isogai T."/>
            <person name="Sugano S."/>
        </authorList>
    </citation>
    <scope>NUCLEOTIDE SEQUENCE [LARGE SCALE MRNA] (ISOFORM 1)</scope>
    <scope>VARIANT ILE-137</scope>
    <source>
        <tissue>Brain</tissue>
        <tissue>Embryo</tissue>
    </source>
</reference>
<reference key="5">
    <citation type="journal article" date="2005" name="Nature">
        <title>Generation and annotation of the DNA sequences of human chromosomes 2 and 4.</title>
        <authorList>
            <person name="Hillier L.W."/>
            <person name="Graves T.A."/>
            <person name="Fulton R.S."/>
            <person name="Fulton L.A."/>
            <person name="Pepin K.H."/>
            <person name="Minx P."/>
            <person name="Wagner-McPherson C."/>
            <person name="Layman D."/>
            <person name="Wylie K."/>
            <person name="Sekhon M."/>
            <person name="Becker M.C."/>
            <person name="Fewell G.A."/>
            <person name="Delehaunty K.D."/>
            <person name="Miner T.L."/>
            <person name="Nash W.E."/>
            <person name="Kremitzki C."/>
            <person name="Oddy L."/>
            <person name="Du H."/>
            <person name="Sun H."/>
            <person name="Bradshaw-Cordum H."/>
            <person name="Ali J."/>
            <person name="Carter J."/>
            <person name="Cordes M."/>
            <person name="Harris A."/>
            <person name="Isak A."/>
            <person name="van Brunt A."/>
            <person name="Nguyen C."/>
            <person name="Du F."/>
            <person name="Courtney L."/>
            <person name="Kalicki J."/>
            <person name="Ozersky P."/>
            <person name="Abbott S."/>
            <person name="Armstrong J."/>
            <person name="Belter E.A."/>
            <person name="Caruso L."/>
            <person name="Cedroni M."/>
            <person name="Cotton M."/>
            <person name="Davidson T."/>
            <person name="Desai A."/>
            <person name="Elliott G."/>
            <person name="Erb T."/>
            <person name="Fronick C."/>
            <person name="Gaige T."/>
            <person name="Haakenson W."/>
            <person name="Haglund K."/>
            <person name="Holmes A."/>
            <person name="Harkins R."/>
            <person name="Kim K."/>
            <person name="Kruchowski S.S."/>
            <person name="Strong C.M."/>
            <person name="Grewal N."/>
            <person name="Goyea E."/>
            <person name="Hou S."/>
            <person name="Levy A."/>
            <person name="Martinka S."/>
            <person name="Mead K."/>
            <person name="McLellan M.D."/>
            <person name="Meyer R."/>
            <person name="Randall-Maher J."/>
            <person name="Tomlinson C."/>
            <person name="Dauphin-Kohlberg S."/>
            <person name="Kozlowicz-Reilly A."/>
            <person name="Shah N."/>
            <person name="Swearengen-Shahid S."/>
            <person name="Snider J."/>
            <person name="Strong J.T."/>
            <person name="Thompson J."/>
            <person name="Yoakum M."/>
            <person name="Leonard S."/>
            <person name="Pearman C."/>
            <person name="Trani L."/>
            <person name="Radionenko M."/>
            <person name="Waligorski J.E."/>
            <person name="Wang C."/>
            <person name="Rock S.M."/>
            <person name="Tin-Wollam A.-M."/>
            <person name="Maupin R."/>
            <person name="Latreille P."/>
            <person name="Wendl M.C."/>
            <person name="Yang S.-P."/>
            <person name="Pohl C."/>
            <person name="Wallis J.W."/>
            <person name="Spieth J."/>
            <person name="Bieri T.A."/>
            <person name="Berkowicz N."/>
            <person name="Nelson J.O."/>
            <person name="Osborne J."/>
            <person name="Ding L."/>
            <person name="Meyer R."/>
            <person name="Sabo A."/>
            <person name="Shotland Y."/>
            <person name="Sinha P."/>
            <person name="Wohldmann P.E."/>
            <person name="Cook L.L."/>
            <person name="Hickenbotham M.T."/>
            <person name="Eldred J."/>
            <person name="Williams D."/>
            <person name="Jones T.A."/>
            <person name="She X."/>
            <person name="Ciccarelli F.D."/>
            <person name="Izaurralde E."/>
            <person name="Taylor J."/>
            <person name="Schmutz J."/>
            <person name="Myers R.M."/>
            <person name="Cox D.R."/>
            <person name="Huang X."/>
            <person name="McPherson J.D."/>
            <person name="Mardis E.R."/>
            <person name="Clifton S.W."/>
            <person name="Warren W.C."/>
            <person name="Chinwalla A.T."/>
            <person name="Eddy S.R."/>
            <person name="Marra M.A."/>
            <person name="Ovcharenko I."/>
            <person name="Furey T.S."/>
            <person name="Miller W."/>
            <person name="Eichler E.E."/>
            <person name="Bork P."/>
            <person name="Suyama M."/>
            <person name="Torrents D."/>
            <person name="Waterston R.H."/>
            <person name="Wilson R.K."/>
        </authorList>
    </citation>
    <scope>NUCLEOTIDE SEQUENCE [LARGE SCALE GENOMIC DNA]</scope>
</reference>
<reference key="6">
    <citation type="submission" date="2005-09" db="EMBL/GenBank/DDBJ databases">
        <authorList>
            <person name="Mural R.J."/>
            <person name="Istrail S."/>
            <person name="Sutton G.G."/>
            <person name="Florea L."/>
            <person name="Halpern A.L."/>
            <person name="Mobarry C.M."/>
            <person name="Lippert R."/>
            <person name="Walenz B."/>
            <person name="Shatkay H."/>
            <person name="Dew I."/>
            <person name="Miller J.R."/>
            <person name="Flanigan M.J."/>
            <person name="Edwards N.J."/>
            <person name="Bolanos R."/>
            <person name="Fasulo D."/>
            <person name="Halldorsson B.V."/>
            <person name="Hannenhalli S."/>
            <person name="Turner R."/>
            <person name="Yooseph S."/>
            <person name="Lu F."/>
            <person name="Nusskern D.R."/>
            <person name="Shue B.C."/>
            <person name="Zheng X.H."/>
            <person name="Zhong F."/>
            <person name="Delcher A.L."/>
            <person name="Huson D.H."/>
            <person name="Kravitz S.A."/>
            <person name="Mouchard L."/>
            <person name="Reinert K."/>
            <person name="Remington K.A."/>
            <person name="Clark A.G."/>
            <person name="Waterman M.S."/>
            <person name="Eichler E.E."/>
            <person name="Adams M.D."/>
            <person name="Hunkapiller M.W."/>
            <person name="Myers E.W."/>
            <person name="Venter J.C."/>
        </authorList>
    </citation>
    <scope>NUCLEOTIDE SEQUENCE [LARGE SCALE GENOMIC DNA]</scope>
</reference>
<reference key="7">
    <citation type="journal article" date="2004" name="Genome Res.">
        <title>The status, quality, and expansion of the NIH full-length cDNA project: the Mammalian Gene Collection (MGC).</title>
        <authorList>
            <consortium name="The MGC Project Team"/>
        </authorList>
    </citation>
    <scope>NUCLEOTIDE SEQUENCE [LARGE SCALE MRNA] (ISOFORMS 2 AND 3)</scope>
    <source>
        <tissue>Bone</tissue>
        <tissue>Kidney</tissue>
    </source>
</reference>
<reference key="8">
    <citation type="journal article" date="2023" name="Cell">
        <title>Glycosylated queuosines in tRNAs optimize translational rate and post-embryonic growth.</title>
        <authorList>
            <person name="Zhao X."/>
            <person name="Ma D."/>
            <person name="Ishiguro K."/>
            <person name="Saito H."/>
            <person name="Akichika S."/>
            <person name="Matsuzawa I."/>
            <person name="Mito M."/>
            <person name="Irie T."/>
            <person name="Ishibashi K."/>
            <person name="Wakabayashi K."/>
            <person name="Sakaguchi Y."/>
            <person name="Yokoyama T."/>
            <person name="Mishima Y."/>
            <person name="Shirouzu M."/>
            <person name="Iwasaki S."/>
            <person name="Suzuki T."/>
            <person name="Suzuki T."/>
        </authorList>
    </citation>
    <scope>FUNCTION</scope>
    <scope>CATALYTIC ACTIVITY</scope>
    <scope>BIOPHYSICOCHEMICAL PROPERTIES</scope>
    <scope>SUBCELLULAR LOCATION</scope>
</reference>
<dbReference type="EC" id="2.4.1.110" evidence="5"/>
<dbReference type="EMBL" id="AY281366">
    <property type="protein sequence ID" value="AAQ16408.1"/>
    <property type="molecule type" value="mRNA"/>
</dbReference>
<dbReference type="EMBL" id="AB597184">
    <property type="protein sequence ID" value="BAK74843.1"/>
    <property type="molecule type" value="mRNA"/>
</dbReference>
<dbReference type="EMBL" id="AB201269">
    <property type="protein sequence ID" value="BAE16560.1"/>
    <property type="molecule type" value="mRNA"/>
</dbReference>
<dbReference type="EMBL" id="AK021815">
    <property type="protein sequence ID" value="BAB13904.1"/>
    <property type="status" value="ALT_INIT"/>
    <property type="molecule type" value="mRNA"/>
</dbReference>
<dbReference type="EMBL" id="AK291357">
    <property type="protein sequence ID" value="BAF84046.1"/>
    <property type="molecule type" value="mRNA"/>
</dbReference>
<dbReference type="EMBL" id="AC009957">
    <property type="status" value="NOT_ANNOTATED_CDS"/>
    <property type="molecule type" value="Genomic_DNA"/>
</dbReference>
<dbReference type="EMBL" id="AC010130">
    <property type="status" value="NOT_ANNOTATED_CDS"/>
    <property type="molecule type" value="Genomic_DNA"/>
</dbReference>
<dbReference type="EMBL" id="AC010681">
    <property type="protein sequence ID" value="AAX93131.1"/>
    <property type="status" value="ALT_INIT"/>
    <property type="molecule type" value="Genomic_DNA"/>
</dbReference>
<dbReference type="EMBL" id="AC016910">
    <property type="protein sequence ID" value="AAY14764.1"/>
    <property type="molecule type" value="Genomic_DNA"/>
</dbReference>
<dbReference type="EMBL" id="CH471058">
    <property type="protein sequence ID" value="EAX11579.1"/>
    <property type="molecule type" value="Genomic_DNA"/>
</dbReference>
<dbReference type="EMBL" id="CH471058">
    <property type="protein sequence ID" value="EAX11580.1"/>
    <property type="molecule type" value="Genomic_DNA"/>
</dbReference>
<dbReference type="EMBL" id="CH471058">
    <property type="protein sequence ID" value="EAX11581.1"/>
    <property type="molecule type" value="Genomic_DNA"/>
</dbReference>
<dbReference type="EMBL" id="CH471058">
    <property type="protein sequence ID" value="EAX11582.1"/>
    <property type="molecule type" value="Genomic_DNA"/>
</dbReference>
<dbReference type="EMBL" id="CH471058">
    <property type="protein sequence ID" value="EAX11583.1"/>
    <property type="molecule type" value="Genomic_DNA"/>
</dbReference>
<dbReference type="EMBL" id="CH471058">
    <property type="protein sequence ID" value="EAX11584.1"/>
    <property type="molecule type" value="Genomic_DNA"/>
</dbReference>
<dbReference type="EMBL" id="CH471058">
    <property type="protein sequence ID" value="EAX11585.1"/>
    <property type="molecule type" value="Genomic_DNA"/>
</dbReference>
<dbReference type="EMBL" id="BC017741">
    <property type="protein sequence ID" value="AAH17741.1"/>
    <property type="molecule type" value="mRNA"/>
</dbReference>
<dbReference type="EMBL" id="BC061699">
    <property type="protein sequence ID" value="AAH61699.1"/>
    <property type="molecule type" value="mRNA"/>
</dbReference>
<dbReference type="CCDS" id="CCDS2185.1">
    <molecule id="Q4AE62-2"/>
</dbReference>
<dbReference type="CCDS" id="CCDS33300.1">
    <molecule id="Q4AE62-1"/>
</dbReference>
<dbReference type="CCDS" id="CCDS63029.1">
    <molecule id="Q4AE62-4"/>
</dbReference>
<dbReference type="CCDS" id="CCDS74582.1">
    <molecule id="Q4AE62-6"/>
</dbReference>
<dbReference type="CCDS" id="CCDS74583.1">
    <molecule id="Q4AE62-5"/>
</dbReference>
<dbReference type="RefSeq" id="NP_001006637.1">
    <molecule id="Q4AE62-1"/>
    <property type="nucleotide sequence ID" value="NM_001006636.5"/>
</dbReference>
<dbReference type="RefSeq" id="NP_001158101.1">
    <molecule id="Q4AE62-1"/>
    <property type="nucleotide sequence ID" value="NM_001164629.5"/>
</dbReference>
<dbReference type="RefSeq" id="NP_001271162.1">
    <molecule id="Q4AE62-4"/>
    <property type="nucleotide sequence ID" value="NM_001284233.4"/>
</dbReference>
<dbReference type="RefSeq" id="NP_001271163.1">
    <molecule id="Q4AE62-6"/>
    <property type="nucleotide sequence ID" value="NM_001284234.3"/>
</dbReference>
<dbReference type="RefSeq" id="NP_001271164.1">
    <molecule id="Q4AE62-3"/>
    <property type="nucleotide sequence ID" value="NM_001284235.2"/>
</dbReference>
<dbReference type="RefSeq" id="NP_001271167.1">
    <molecule id="Q4AE62-5"/>
    <property type="nucleotide sequence ID" value="NM_001284238.3"/>
</dbReference>
<dbReference type="RefSeq" id="NP_001341280.1">
    <molecule id="Q4AE62-6"/>
    <property type="nucleotide sequence ID" value="NM_001354351.2"/>
</dbReference>
<dbReference type="RefSeq" id="NP_001341283.1">
    <molecule id="Q4AE62-1"/>
    <property type="nucleotide sequence ID" value="NM_001354354.2"/>
</dbReference>
<dbReference type="RefSeq" id="NP_001341285.1">
    <molecule id="Q4AE62-3"/>
    <property type="nucleotide sequence ID" value="NM_001354356.2"/>
</dbReference>
<dbReference type="RefSeq" id="NP_001341287.1">
    <molecule id="Q4AE62-3"/>
    <property type="nucleotide sequence ID" value="NM_001354358.1"/>
</dbReference>
<dbReference type="RefSeq" id="NP_001341289.1">
    <molecule id="Q4AE62-4"/>
    <property type="nucleotide sequence ID" value="NM_001354360.2"/>
</dbReference>
<dbReference type="RefSeq" id="NP_001341290.1">
    <molecule id="Q4AE62-1"/>
    <property type="nucleotide sequence ID" value="NM_001354361.1"/>
</dbReference>
<dbReference type="RefSeq" id="NP_001363236.1">
    <molecule id="Q4AE62-1"/>
    <property type="nucleotide sequence ID" value="NM_001376307.2"/>
</dbReference>
<dbReference type="RefSeq" id="NP_001363237.1">
    <molecule id="Q4AE62-1"/>
    <property type="nucleotide sequence ID" value="NM_001376308.2"/>
</dbReference>
<dbReference type="RefSeq" id="NP_001363238.1">
    <molecule id="Q4AE62-1"/>
    <property type="nucleotide sequence ID" value="NM_001376309.2"/>
</dbReference>
<dbReference type="RefSeq" id="NP_001363239.1">
    <molecule id="Q4AE62-1"/>
    <property type="nucleotide sequence ID" value="NM_001376310.2"/>
</dbReference>
<dbReference type="RefSeq" id="NP_001363240.1">
    <molecule id="Q4AE62-1"/>
    <property type="nucleotide sequence ID" value="NM_001376311.2"/>
</dbReference>
<dbReference type="RefSeq" id="NP_001363241.1">
    <molecule id="Q4AE62-1"/>
    <property type="nucleotide sequence ID" value="NM_001376312.2"/>
</dbReference>
<dbReference type="RefSeq" id="NP_001363242.1">
    <molecule id="Q4AE62-1"/>
    <property type="nucleotide sequence ID" value="NM_001376313.2"/>
</dbReference>
<dbReference type="RefSeq" id="NP_001363243.1">
    <molecule id="Q4AE62-1"/>
    <property type="nucleotide sequence ID" value="NM_001376314.2"/>
</dbReference>
<dbReference type="RefSeq" id="NP_001363244.1">
    <molecule id="Q4AE62-1"/>
    <property type="nucleotide sequence ID" value="NM_001376315.2"/>
</dbReference>
<dbReference type="RefSeq" id="NP_001363247.1">
    <molecule id="Q4AE62-4"/>
    <property type="nucleotide sequence ID" value="NM_001376318.2"/>
</dbReference>
<dbReference type="RefSeq" id="NP_001363248.1">
    <molecule id="Q4AE62-4"/>
    <property type="nucleotide sequence ID" value="NM_001376319.2"/>
</dbReference>
<dbReference type="RefSeq" id="NP_001363249.1">
    <molecule id="Q4AE62-2"/>
    <property type="nucleotide sequence ID" value="NM_001376320.2"/>
</dbReference>
<dbReference type="RefSeq" id="NP_001363250.1">
    <molecule id="Q4AE62-2"/>
    <property type="nucleotide sequence ID" value="NM_001376321.2"/>
</dbReference>
<dbReference type="RefSeq" id="NP_001363251.1">
    <molecule id="Q4AE62-2"/>
    <property type="nucleotide sequence ID" value="NM_001376322.2"/>
</dbReference>
<dbReference type="RefSeq" id="NP_001363252.1">
    <molecule id="Q4AE62-2"/>
    <property type="nucleotide sequence ID" value="NM_001376323.2"/>
</dbReference>
<dbReference type="RefSeq" id="NP_001363253.1">
    <molecule id="Q4AE62-2"/>
    <property type="nucleotide sequence ID" value="NM_001376324.2"/>
</dbReference>
<dbReference type="RefSeq" id="NP_001363259.1">
    <molecule id="Q4AE62-3"/>
    <property type="nucleotide sequence ID" value="NM_001376330.1"/>
</dbReference>
<dbReference type="RefSeq" id="NP_078935.2">
    <molecule id="Q4AE62-2"/>
    <property type="nucleotide sequence ID" value="NM_024659.4"/>
</dbReference>
<dbReference type="RefSeq" id="XP_016860416.1">
    <property type="nucleotide sequence ID" value="XM_017004927.1"/>
</dbReference>
<dbReference type="RefSeq" id="XP_016860417.1">
    <property type="nucleotide sequence ID" value="XM_017004928.1"/>
</dbReference>
<dbReference type="RefSeq" id="XP_016860418.1">
    <property type="nucleotide sequence ID" value="XM_017004929.1"/>
</dbReference>
<dbReference type="RefSeq" id="XP_016860419.1">
    <property type="nucleotide sequence ID" value="XM_017004930.1"/>
</dbReference>
<dbReference type="RefSeq" id="XP_016860420.1">
    <property type="nucleotide sequence ID" value="XM_017004931.1"/>
</dbReference>
<dbReference type="RefSeq" id="XP_016860421.1">
    <property type="nucleotide sequence ID" value="XM_017004932.1"/>
</dbReference>
<dbReference type="RefSeq" id="XP_016860422.1">
    <property type="nucleotide sequence ID" value="XM_017004933.1"/>
</dbReference>
<dbReference type="RefSeq" id="XP_016860423.1">
    <property type="nucleotide sequence ID" value="XM_017004934.1"/>
</dbReference>
<dbReference type="RefSeq" id="XP_016860424.1">
    <property type="nucleotide sequence ID" value="XM_017004935.1"/>
</dbReference>
<dbReference type="RefSeq" id="XP_016860425.1">
    <property type="nucleotide sequence ID" value="XM_017004936.1"/>
</dbReference>
<dbReference type="RefSeq" id="XP_016860431.1">
    <property type="nucleotide sequence ID" value="XM_017004942.1"/>
</dbReference>
<dbReference type="RefSeq" id="XP_016860432.1">
    <property type="nucleotide sequence ID" value="XM_017004943.1"/>
</dbReference>
<dbReference type="RefSeq" id="XP_016860433.1">
    <property type="nucleotide sequence ID" value="XM_017004944.1"/>
</dbReference>
<dbReference type="RefSeq" id="XP_016860434.1">
    <property type="nucleotide sequence ID" value="XM_017004945.1"/>
</dbReference>
<dbReference type="RefSeq" id="XP_016860435.1">
    <property type="nucleotide sequence ID" value="XM_017004946.1"/>
</dbReference>
<dbReference type="RefSeq" id="XP_016860436.1">
    <property type="nucleotide sequence ID" value="XM_017004947.1"/>
</dbReference>
<dbReference type="RefSeq" id="XP_016860437.1">
    <property type="nucleotide sequence ID" value="XM_017004948.1"/>
</dbReference>
<dbReference type="BioGRID" id="122829">
    <property type="interactions" value="3"/>
</dbReference>
<dbReference type="FunCoup" id="Q4AE62">
    <property type="interactions" value="1159"/>
</dbReference>
<dbReference type="STRING" id="9606.ENSP00000376608"/>
<dbReference type="CAZy" id="GT4">
    <property type="family name" value="Glycosyltransferase Family 4"/>
</dbReference>
<dbReference type="iPTMnet" id="Q4AE62"/>
<dbReference type="PhosphoSitePlus" id="Q4AE62"/>
<dbReference type="BioMuta" id="GTDC1"/>
<dbReference type="DMDM" id="121946960"/>
<dbReference type="jPOST" id="Q4AE62"/>
<dbReference type="MassIVE" id="Q4AE62"/>
<dbReference type="PaxDb" id="9606-ENSP00000376608"/>
<dbReference type="PeptideAtlas" id="Q4AE62"/>
<dbReference type="ProteomicsDB" id="34139"/>
<dbReference type="ProteomicsDB" id="43640"/>
<dbReference type="ProteomicsDB" id="62093">
    <molecule id="Q4AE62-1"/>
</dbReference>
<dbReference type="ProteomicsDB" id="62094">
    <molecule id="Q4AE62-2"/>
</dbReference>
<dbReference type="ProteomicsDB" id="62095">
    <molecule id="Q4AE62-3"/>
</dbReference>
<dbReference type="Pumba" id="Q4AE62"/>
<dbReference type="Antibodypedia" id="33618">
    <property type="antibodies" value="154 antibodies from 23 providers"/>
</dbReference>
<dbReference type="DNASU" id="79712"/>
<dbReference type="Ensembl" id="ENST00000241391.9">
    <molecule id="Q4AE62-4"/>
    <property type="protein sequence ID" value="ENSP00000241391.6"/>
    <property type="gene ID" value="ENSG00000121964.15"/>
</dbReference>
<dbReference type="Ensembl" id="ENST00000344850.8">
    <molecule id="Q4AE62-1"/>
    <property type="protein sequence ID" value="ENSP00000339750.4"/>
    <property type="gene ID" value="ENSG00000121964.15"/>
</dbReference>
<dbReference type="Ensembl" id="ENST00000392867.7">
    <molecule id="Q4AE62-2"/>
    <property type="protein sequence ID" value="ENSP00000376606.3"/>
    <property type="gene ID" value="ENSG00000121964.15"/>
</dbReference>
<dbReference type="Ensembl" id="ENST00000392869.6">
    <molecule id="Q4AE62-1"/>
    <property type="protein sequence ID" value="ENSP00000376608.1"/>
    <property type="gene ID" value="ENSG00000121964.15"/>
</dbReference>
<dbReference type="Ensembl" id="ENST00000392871.6">
    <molecule id="Q4AE62-4"/>
    <property type="protein sequence ID" value="ENSP00000376610.2"/>
    <property type="gene ID" value="ENSG00000121964.15"/>
</dbReference>
<dbReference type="Ensembl" id="ENST00000409214.5">
    <molecule id="Q4AE62-1"/>
    <property type="protein sequence ID" value="ENSP00000386581.1"/>
    <property type="gene ID" value="ENSG00000121964.15"/>
</dbReference>
<dbReference type="Ensembl" id="ENST00000463875.6">
    <molecule id="Q4AE62-6"/>
    <property type="protein sequence ID" value="ENSP00000437964.1"/>
    <property type="gene ID" value="ENSG00000121964.15"/>
</dbReference>
<dbReference type="Ensembl" id="ENST00000542155.5">
    <molecule id="Q4AE62-1"/>
    <property type="protein sequence ID" value="ENSP00000438323.1"/>
    <property type="gene ID" value="ENSG00000121964.15"/>
</dbReference>
<dbReference type="Ensembl" id="ENST00000618778.4">
    <molecule id="Q4AE62-5"/>
    <property type="protein sequence ID" value="ENSP00000484990.1"/>
    <property type="gene ID" value="ENSG00000121964.15"/>
</dbReference>
<dbReference type="Ensembl" id="ENST00000682281.1">
    <molecule id="Q4AE62-1"/>
    <property type="protein sequence ID" value="ENSP00000507713.1"/>
    <property type="gene ID" value="ENSG00000121964.15"/>
</dbReference>
<dbReference type="GeneID" id="79712"/>
<dbReference type="KEGG" id="hsa:79712"/>
<dbReference type="MANE-Select" id="ENST00000682281.1">
    <property type="protein sequence ID" value="ENSP00000507713.1"/>
    <property type="RefSeq nucleotide sequence ID" value="NM_001376312.2"/>
    <property type="RefSeq protein sequence ID" value="NP_001363241.1"/>
</dbReference>
<dbReference type="UCSC" id="uc002tvo.4">
    <property type="organism name" value="human"/>
</dbReference>
<dbReference type="UCSC" id="uc002tvp.4">
    <molecule id="Q4AE62-1"/>
    <property type="organism name" value="human"/>
</dbReference>
<dbReference type="UCSC" id="uc010fno.5">
    <property type="organism name" value="human"/>
</dbReference>
<dbReference type="UCSC" id="uc061ofi.1">
    <property type="organism name" value="human"/>
</dbReference>
<dbReference type="AGR" id="HGNC:20887"/>
<dbReference type="CTD" id="79712"/>
<dbReference type="DisGeNET" id="79712"/>
<dbReference type="GeneCards" id="GTDC1"/>
<dbReference type="HGNC" id="HGNC:20887">
    <property type="gene designation" value="GTDC1"/>
</dbReference>
<dbReference type="HPA" id="ENSG00000121964">
    <property type="expression patterns" value="Low tissue specificity"/>
</dbReference>
<dbReference type="MIM" id="610165">
    <property type="type" value="gene"/>
</dbReference>
<dbReference type="neXtProt" id="NX_Q4AE62"/>
<dbReference type="OpenTargets" id="ENSG00000121964"/>
<dbReference type="PharmGKB" id="PA134892601"/>
<dbReference type="VEuPathDB" id="HostDB:ENSG00000121964"/>
<dbReference type="eggNOG" id="ENOG502QQJ3">
    <property type="taxonomic scope" value="Eukaryota"/>
</dbReference>
<dbReference type="GeneTree" id="ENSGT00390000006631"/>
<dbReference type="InParanoid" id="Q4AE62"/>
<dbReference type="OMA" id="HRWEYDK"/>
<dbReference type="OrthoDB" id="10032790at2759"/>
<dbReference type="PAN-GO" id="Q4AE62">
    <property type="GO annotations" value="0 GO annotations based on evolutionary models"/>
</dbReference>
<dbReference type="PhylomeDB" id="Q4AE62"/>
<dbReference type="TreeFam" id="TF324818"/>
<dbReference type="PathwayCommons" id="Q4AE62"/>
<dbReference type="BioGRID-ORCS" id="79712">
    <property type="hits" value="16 hits in 1160 CRISPR screens"/>
</dbReference>
<dbReference type="ChiTaRS" id="GTDC1">
    <property type="organism name" value="human"/>
</dbReference>
<dbReference type="GenomeRNAi" id="79712"/>
<dbReference type="Pharos" id="Q4AE62">
    <property type="development level" value="Tbio"/>
</dbReference>
<dbReference type="PRO" id="PR:Q4AE62"/>
<dbReference type="Proteomes" id="UP000005640">
    <property type="component" value="Chromosome 2"/>
</dbReference>
<dbReference type="RNAct" id="Q4AE62">
    <property type="molecule type" value="protein"/>
</dbReference>
<dbReference type="Bgee" id="ENSG00000121964">
    <property type="expression patterns" value="Expressed in cortical plate and 196 other cell types or tissues"/>
</dbReference>
<dbReference type="ExpressionAtlas" id="Q4AE62">
    <property type="expression patterns" value="baseline and differential"/>
</dbReference>
<dbReference type="GO" id="GO:0005737">
    <property type="term" value="C:cytoplasm"/>
    <property type="evidence" value="ECO:0000314"/>
    <property type="project" value="UniProtKB"/>
</dbReference>
<dbReference type="GO" id="GO:0005634">
    <property type="term" value="C:nucleus"/>
    <property type="evidence" value="ECO:0000314"/>
    <property type="project" value="UniProtKB"/>
</dbReference>
<dbReference type="GO" id="GO:0016438">
    <property type="term" value="F:tRNA-queuosine(34) beta-mannosyltransferase activity"/>
    <property type="evidence" value="ECO:0000314"/>
    <property type="project" value="UniProtKB"/>
</dbReference>
<dbReference type="GO" id="GO:0006417">
    <property type="term" value="P:regulation of translation"/>
    <property type="evidence" value="ECO:0000314"/>
    <property type="project" value="UniProtKB"/>
</dbReference>
<dbReference type="GO" id="GO:0006400">
    <property type="term" value="P:tRNA modification"/>
    <property type="evidence" value="ECO:0000314"/>
    <property type="project" value="UniProtKB"/>
</dbReference>
<dbReference type="CDD" id="cd01635">
    <property type="entry name" value="Glycosyltransferase_GTB-type"/>
    <property type="match status" value="1"/>
</dbReference>
<dbReference type="Gene3D" id="3.40.50.2000">
    <property type="entry name" value="Glycogen Phosphorylase B"/>
    <property type="match status" value="1"/>
</dbReference>
<dbReference type="InterPro" id="IPR001296">
    <property type="entry name" value="Glyco_trans_1"/>
</dbReference>
<dbReference type="InterPro" id="IPR051862">
    <property type="entry name" value="GT-like_domain_containing_1"/>
</dbReference>
<dbReference type="InterPro" id="IPR022701">
    <property type="entry name" value="QTMAN_N"/>
</dbReference>
<dbReference type="PANTHER" id="PTHR13615">
    <property type="entry name" value="GLYCOSYLTRANSFERASE-LIKE 1"/>
    <property type="match status" value="1"/>
</dbReference>
<dbReference type="PANTHER" id="PTHR13615:SF3">
    <property type="entry name" value="GLYCOSYLTRANSFERASE-LIKE DOMAIN-CONTAINING PROTEIN 1"/>
    <property type="match status" value="1"/>
</dbReference>
<dbReference type="Pfam" id="PF00534">
    <property type="entry name" value="Glycos_transf_1"/>
    <property type="match status" value="1"/>
</dbReference>
<dbReference type="Pfam" id="PF12038">
    <property type="entry name" value="QTMAN_N"/>
    <property type="match status" value="1"/>
</dbReference>
<dbReference type="SUPFAM" id="SSF53756">
    <property type="entry name" value="UDP-Glycosyltransferase/glycogen phosphorylase"/>
    <property type="match status" value="1"/>
</dbReference>
<keyword id="KW-0025">Alternative splicing</keyword>
<keyword id="KW-0963">Cytoplasm</keyword>
<keyword id="KW-0328">Glycosyltransferase</keyword>
<keyword id="KW-0539">Nucleus</keyword>
<keyword id="KW-1267">Proteomics identification</keyword>
<keyword id="KW-1185">Reference proteome</keyword>
<keyword id="KW-0808">Transferase</keyword>
<comment type="function">
    <text evidence="5">Glycosyltransferase that specifically catalyzes mannosylation of cytoplasmic tRNA(Asp) modified with queuosine at position 34 (queuosine(34)) (PubMed:37992713). Mannosylates the cyclopentene moiety of queuosine(34) in tRNA(Asp) to form mannosyl-queuosine(34) (PubMed:37992713). Mannosylation of queuosine(34) in tRNA(Asp) is required to slow-down elongation at cognate codons, GAC and GAU, thereby regulating protein translation (PubMed:37992713).</text>
</comment>
<comment type="catalytic activity">
    <reaction evidence="5">
        <text>queuosine(34) in tRNA(Asp) + GDP-alpha-D-mannose = O-4''-alpha-D-mannosylqueuosine(34) in tRNA(Asp) + GDP + H(+)</text>
        <dbReference type="Rhea" id="RHEA:12885"/>
        <dbReference type="Rhea" id="RHEA-COMP:18572"/>
        <dbReference type="Rhea" id="RHEA-COMP:18581"/>
        <dbReference type="ChEBI" id="CHEBI:15378"/>
        <dbReference type="ChEBI" id="CHEBI:57527"/>
        <dbReference type="ChEBI" id="CHEBI:58189"/>
        <dbReference type="ChEBI" id="CHEBI:194431"/>
        <dbReference type="ChEBI" id="CHEBI:194442"/>
        <dbReference type="EC" id="2.4.1.110"/>
    </reaction>
    <physiologicalReaction direction="left-to-right" evidence="5">
        <dbReference type="Rhea" id="RHEA:12886"/>
    </physiologicalReaction>
</comment>
<comment type="biophysicochemical properties">
    <kinetics>
        <KM evidence="5">78 nM for tRNA(Asp)</KM>
        <KM evidence="5">69 uM for GDP-alpha-D-mannose</KM>
    </kinetics>
</comment>
<comment type="subcellular location">
    <subcellularLocation>
        <location evidence="5">Cytoplasm</location>
    </subcellularLocation>
    <subcellularLocation>
        <location evidence="5">Nucleus</location>
    </subcellularLocation>
</comment>
<comment type="alternative products">
    <event type="alternative splicing"/>
    <isoform>
        <id>Q4AE62-1</id>
        <name>1</name>
        <sequence type="displayed"/>
    </isoform>
    <isoform>
        <id>Q4AE62-2</id>
        <name>2</name>
        <sequence type="described" ref="VSP_029379"/>
    </isoform>
    <isoform>
        <id>Q4AE62-3</id>
        <name>3</name>
        <sequence type="described" ref="VSP_029378"/>
    </isoform>
    <isoform>
        <id>Q4AE62-4</id>
        <name>4</name>
        <name>c</name>
        <sequence type="described" ref="VSP_057598 VSP_057599"/>
    </isoform>
    <isoform>
        <id>Q4AE62-5</id>
        <name>5</name>
        <name>f</name>
        <sequence type="described" ref="VSP_057597"/>
    </isoform>
    <isoform>
        <id>Q4AE62-6</id>
        <name>6</name>
        <name>d</name>
        <sequence type="described" ref="VSP_057596"/>
    </isoform>
</comment>
<comment type="tissue specificity">
    <text evidence="3 4">Ubiquitous. Expressed at high levels in the lung, brain, spleen, testis, placenta. ovary, pancreas, spleen and peripheral blood leukocytes. Expressed at low level in the colon, small intestine, kidney, skeletal muscle and thymus. Expressed at high level in colon adenocarcinoma.</text>
</comment>
<comment type="similarity">
    <text evidence="10">Belongs to the glycosyltransferase group 1 family. Glycosyltransferase 4 subfamily.</text>
</comment>
<comment type="sequence caution" evidence="10">
    <conflict type="erroneous initiation">
        <sequence resource="EMBL-CDS" id="AAX93131"/>
    </conflict>
    <text>Truncated N-terminus.</text>
</comment>
<comment type="sequence caution" evidence="10">
    <conflict type="erroneous initiation">
        <sequence resource="EMBL-CDS" id="BAB13904"/>
    </conflict>
    <text>Truncated N-terminus.</text>
</comment>
<name>QTMAN_HUMAN</name>
<protein>
    <recommendedName>
        <fullName evidence="9">tRNA-queuosine alpha-mannosyltransferase</fullName>
        <shortName evidence="9">QTMAN</shortName>
        <ecNumber evidence="5">2.4.1.110</ecNumber>
    </recommendedName>
    <alternativeName>
        <fullName evidence="10">Glycosyltransferase-like domain-containing protein 1</fullName>
    </alternativeName>
    <alternativeName>
        <fullName evidence="8">Mannosyltransferase-like protein Xa</fullName>
    </alternativeName>
    <alternativeName>
        <fullName evidence="8">Mat-Xa</fullName>
    </alternativeName>
</protein>
<feature type="chain" id="PRO_0000311088" description="tRNA-queuosine alpha-mannosyltransferase">
    <location>
        <begin position="1"/>
        <end position="458"/>
    </location>
</feature>
<feature type="region of interest" description="Disordered" evidence="1">
    <location>
        <begin position="242"/>
        <end position="267"/>
    </location>
</feature>
<feature type="compositionally biased region" description="Basic and acidic residues" evidence="1">
    <location>
        <begin position="242"/>
        <end position="262"/>
    </location>
</feature>
<feature type="splice variant" id="VSP_057596" description="In isoform 6.">
    <location>
        <begin position="1"/>
        <end position="129"/>
    </location>
</feature>
<feature type="splice variant" id="VSP_057597" description="In isoform 5.">
    <original>MSILIIEAFYGGSHKQLVDLLQEELGDCVVYTLPAKKWHWRARTSALYFSQTIPISEHY</original>
    <variation>MLTLHVWIWFGFMPCPNLMQNYNHQCC</variation>
    <location>
        <begin position="1"/>
        <end position="59"/>
    </location>
</feature>
<feature type="splice variant" id="VSP_029378" description="In isoform 3." evidence="7">
    <location>
        <begin position="293"/>
        <end position="458"/>
    </location>
</feature>
<feature type="splice variant" id="VSP_029379" description="In isoform 2." evidence="7">
    <location>
        <begin position="293"/>
        <end position="377"/>
    </location>
</feature>
<feature type="splice variant" id="VSP_057598" description="In isoform 4.">
    <original>DIFSEAKKALGSSVLHWGYLPSKDDYFQVLCMADVVISTAKHEFFGVA</original>
    <variation>GWKLCTVGVTHFVLKIWFIPKYFQLNICILHLNSFQKGSRISARDQIL</variation>
    <location>
        <begin position="329"/>
        <end position="376"/>
    </location>
</feature>
<feature type="splice variant" id="VSP_057599" description="In isoform 4.">
    <location>
        <begin position="377"/>
        <end position="458"/>
    </location>
</feature>
<feature type="sequence variant" id="VAR_037136" description="In dbSNP:rs3731958." evidence="2 3">
    <original>M</original>
    <variation>I</variation>
    <location>
        <position position="137"/>
    </location>
</feature>
<sequence length="458" mass="52597">MSILIIEAFYGGSHKQLVDLLQEELGDCVVYTLPAKKWHWRARTSALYFSQTIPISEHYRTLFASSVLNLTELAALRPDLGKLKKILYFHENQLIYPVKKCQERDFQYGYNQILSCLVADVVVFNSVFNMESFLTSMGKFMKLIPDHRPKDLESIIRPKCQVIYFPIRFPDVSRFMPKHKTTHLKKMLGLKGNGGAVLSMALPFQPEQRDSEDLLKNFNSECDTHCGLDTARQEYLGNSLRQESDLKKSTSSDNSSSHHGENKQNLTVDPCDILGGVDNQQRLLHIVWPHRWEHDKDPESFFKVLMHLKDLGLNFHVSVLGETFTDVPDIFSEAKKALGSSVLHWGYLPSKDDYFQVLCMADVVISTAKHEFFGVAMLEAVYCGCYPLCPKDLVYPEIFPAEYLYSTPEQLSKRLQNFCKRPDIIRKHLYKGEIAPFSWAALHGKFRSLLTTEPREDL</sequence>
<evidence type="ECO:0000256" key="1">
    <source>
        <dbReference type="SAM" id="MobiDB-lite"/>
    </source>
</evidence>
<evidence type="ECO:0000269" key="2">
    <source>
    </source>
</evidence>
<evidence type="ECO:0000269" key="3">
    <source>
    </source>
</evidence>
<evidence type="ECO:0000269" key="4">
    <source>
    </source>
</evidence>
<evidence type="ECO:0000269" key="5">
    <source>
    </source>
</evidence>
<evidence type="ECO:0000303" key="6">
    <source>
    </source>
</evidence>
<evidence type="ECO:0000303" key="7">
    <source>
    </source>
</evidence>
<evidence type="ECO:0000303" key="8">
    <source>
    </source>
</evidence>
<evidence type="ECO:0000303" key="9">
    <source>
    </source>
</evidence>
<evidence type="ECO:0000305" key="10"/>
<evidence type="ECO:0000312" key="11">
    <source>
        <dbReference type="HGNC" id="HGNC:20887"/>
    </source>
</evidence>
<proteinExistence type="evidence at protein level"/>